<keyword id="KW-0521">NADP</keyword>
<keyword id="KW-0560">Oxidoreductase</keyword>
<accession>P39483</accession>
<gene>
    <name type="primary">gdhII</name>
</gene>
<feature type="chain" id="PRO_0000054610" description="Glucose 1-dehydrogenase 2">
    <location>
        <begin position="1"/>
        <end position="261"/>
    </location>
</feature>
<feature type="active site" description="Proton acceptor" evidence="2">
    <location>
        <position position="158"/>
    </location>
</feature>
<feature type="binding site" evidence="1">
    <location>
        <begin position="11"/>
        <end position="35"/>
    </location>
    <ligand>
        <name>NADP(+)</name>
        <dbReference type="ChEBI" id="CHEBI:58349"/>
    </ligand>
</feature>
<feature type="binding site" evidence="1">
    <location>
        <position position="145"/>
    </location>
    <ligand>
        <name>substrate</name>
    </ligand>
</feature>
<protein>
    <recommendedName>
        <fullName>Glucose 1-dehydrogenase 2</fullName>
        <ecNumber>1.1.1.47</ecNumber>
    </recommendedName>
    <alternativeName>
        <fullName>GLCDH-II</fullName>
    </alternativeName>
</protein>
<proteinExistence type="inferred from homology"/>
<organism>
    <name type="scientific">Priestia megaterium</name>
    <name type="common">Bacillus megaterium</name>
    <dbReference type="NCBI Taxonomy" id="1404"/>
    <lineage>
        <taxon>Bacteria</taxon>
        <taxon>Bacillati</taxon>
        <taxon>Bacillota</taxon>
        <taxon>Bacilli</taxon>
        <taxon>Bacillales</taxon>
        <taxon>Bacillaceae</taxon>
        <taxon>Priestia</taxon>
    </lineage>
</organism>
<comment type="catalytic activity">
    <reaction>
        <text>D-glucose + NAD(+) = D-glucono-1,5-lactone + NADH + H(+)</text>
        <dbReference type="Rhea" id="RHEA:14293"/>
        <dbReference type="ChEBI" id="CHEBI:4167"/>
        <dbReference type="ChEBI" id="CHEBI:15378"/>
        <dbReference type="ChEBI" id="CHEBI:16217"/>
        <dbReference type="ChEBI" id="CHEBI:57540"/>
        <dbReference type="ChEBI" id="CHEBI:57945"/>
        <dbReference type="EC" id="1.1.1.47"/>
    </reaction>
</comment>
<comment type="catalytic activity">
    <reaction>
        <text>D-glucose + NADP(+) = D-glucono-1,5-lactone + NADPH + H(+)</text>
        <dbReference type="Rhea" id="RHEA:14405"/>
        <dbReference type="ChEBI" id="CHEBI:4167"/>
        <dbReference type="ChEBI" id="CHEBI:15378"/>
        <dbReference type="ChEBI" id="CHEBI:16217"/>
        <dbReference type="ChEBI" id="CHEBI:57783"/>
        <dbReference type="ChEBI" id="CHEBI:58349"/>
        <dbReference type="EC" id="1.1.1.47"/>
    </reaction>
</comment>
<comment type="subunit">
    <text>Homotetramer.</text>
</comment>
<comment type="miscellaneous">
    <text>Prefers NADP to NAD.</text>
</comment>
<comment type="similarity">
    <text evidence="3">Belongs to the short-chain dehydrogenases/reductases (SDR) family.</text>
</comment>
<name>DHG2_PRIMG</name>
<evidence type="ECO:0000250" key="1"/>
<evidence type="ECO:0000255" key="2">
    <source>
        <dbReference type="PROSITE-ProRule" id="PRU10001"/>
    </source>
</evidence>
<evidence type="ECO:0000305" key="3"/>
<dbReference type="EC" id="1.1.1.47"/>
<dbReference type="EMBL" id="D90044">
    <property type="protein sequence ID" value="BAA14100.1"/>
    <property type="molecule type" value="Genomic_DNA"/>
</dbReference>
<dbReference type="PIR" id="I39853">
    <property type="entry name" value="I39853"/>
</dbReference>
<dbReference type="SMR" id="P39483"/>
<dbReference type="OrthoDB" id="6509454at2759"/>
<dbReference type="SABIO-RK" id="P39483"/>
<dbReference type="GO" id="GO:0047934">
    <property type="term" value="F:glucose 1-dehydrogenase (NAD+) activity"/>
    <property type="evidence" value="ECO:0007669"/>
    <property type="project" value="RHEA"/>
</dbReference>
<dbReference type="GO" id="GO:0047935">
    <property type="term" value="F:glucose 1-dehydrogenase (NADP+) activity"/>
    <property type="evidence" value="ECO:0007669"/>
    <property type="project" value="RHEA"/>
</dbReference>
<dbReference type="CDD" id="cd05358">
    <property type="entry name" value="GlcDH_SDR_c"/>
    <property type="match status" value="1"/>
</dbReference>
<dbReference type="FunFam" id="3.40.50.720:FF:000248">
    <property type="entry name" value="Glucose 1-dehydrogenase"/>
    <property type="match status" value="1"/>
</dbReference>
<dbReference type="Gene3D" id="3.40.50.720">
    <property type="entry name" value="NAD(P)-binding Rossmann-like Domain"/>
    <property type="match status" value="1"/>
</dbReference>
<dbReference type="InterPro" id="IPR036291">
    <property type="entry name" value="NAD(P)-bd_dom_sf"/>
</dbReference>
<dbReference type="InterPro" id="IPR020904">
    <property type="entry name" value="Sc_DH/Rdtase_CS"/>
</dbReference>
<dbReference type="InterPro" id="IPR002347">
    <property type="entry name" value="SDR_fam"/>
</dbReference>
<dbReference type="NCBIfam" id="NF005559">
    <property type="entry name" value="PRK07231.1"/>
    <property type="match status" value="1"/>
</dbReference>
<dbReference type="NCBIfam" id="NF006493">
    <property type="entry name" value="PRK08936.1"/>
    <property type="match status" value="1"/>
</dbReference>
<dbReference type="NCBIfam" id="NF009466">
    <property type="entry name" value="PRK12826.1-2"/>
    <property type="match status" value="1"/>
</dbReference>
<dbReference type="PANTHER" id="PTHR43639">
    <property type="entry name" value="OXIDOREDUCTASE, SHORT-CHAIN DEHYDROGENASE/REDUCTASE FAMILY (AFU_ORTHOLOGUE AFUA_5G02870)"/>
    <property type="match status" value="1"/>
</dbReference>
<dbReference type="PANTHER" id="PTHR43639:SF1">
    <property type="entry name" value="SHORT-CHAIN DEHYDROGENASE_REDUCTASE FAMILY PROTEIN"/>
    <property type="match status" value="1"/>
</dbReference>
<dbReference type="Pfam" id="PF13561">
    <property type="entry name" value="adh_short_C2"/>
    <property type="match status" value="1"/>
</dbReference>
<dbReference type="PRINTS" id="PR00081">
    <property type="entry name" value="GDHRDH"/>
</dbReference>
<dbReference type="PRINTS" id="PR00080">
    <property type="entry name" value="SDRFAMILY"/>
</dbReference>
<dbReference type="SUPFAM" id="SSF51735">
    <property type="entry name" value="NAD(P)-binding Rossmann-fold domains"/>
    <property type="match status" value="1"/>
</dbReference>
<dbReference type="PROSITE" id="PS00061">
    <property type="entry name" value="ADH_SHORT"/>
    <property type="match status" value="1"/>
</dbReference>
<reference key="1">
    <citation type="journal article" date="1990" name="J. Ferment. Bioeng.">
        <title>Structure of isozyme genes of glucose dehydrogenase from Bacillus megaterium IAM1030.</title>
        <authorList>
            <person name="Mitamura T."/>
            <person name="Ebora R.V."/>
            <person name="Nakai T."/>
            <person name="Makino Y."/>
            <person name="Negoro S."/>
            <person name="Urabe I."/>
            <person name="Okada H."/>
        </authorList>
    </citation>
    <scope>NUCLEOTIDE SEQUENCE [GENOMIC DNA]</scope>
    <source>
        <strain>IAM 1030 / JCM 20016</strain>
    </source>
</reference>
<sequence>MYTDLKDKVVVVTGGSKGLGRAMAVRFGQEQSKVVVNYRSNEEEALEVKKEIEEAGGQAIIVRGDVTKEEDVVNLVETAVKEFGSLDVMINNAGVENPVPSHELSLENWNQVIDTNLTGAFLGSREAIKYFVENDIKGNVINMSSVHEMIPWPLFVHYAASKGGMKLMTETLALEYAPKGIRVNNIGPGAIDTPINAEKFADPEQRADVESMIPMGYIGKPEEIASVAAFLASSQASYVTGITLFADGGMTKYPSFQAGRG</sequence>